<evidence type="ECO:0000255" key="1"/>
<accession>O28598</accession>
<feature type="signal peptide" evidence="1">
    <location>
        <begin position="1"/>
        <end position="26"/>
    </location>
</feature>
<feature type="chain" id="PRO_0000013671" description="Uncharacterized protein AF_1675">
    <location>
        <begin position="27"/>
        <end position="127"/>
    </location>
</feature>
<dbReference type="EMBL" id="AE000782">
    <property type="protein sequence ID" value="AAB89574.1"/>
    <property type="molecule type" value="Genomic_DNA"/>
</dbReference>
<dbReference type="PIR" id="B69459">
    <property type="entry name" value="B69459"/>
</dbReference>
<dbReference type="RefSeq" id="WP_010879171.1">
    <property type="nucleotide sequence ID" value="NC_000917.1"/>
</dbReference>
<dbReference type="SMR" id="O28598"/>
<dbReference type="STRING" id="224325.AF_1675"/>
<dbReference type="PaxDb" id="224325-AF_1675"/>
<dbReference type="EnsemblBacteria" id="AAB89574">
    <property type="protein sequence ID" value="AAB89574"/>
    <property type="gene ID" value="AF_1675"/>
</dbReference>
<dbReference type="KEGG" id="afu:AF_1675"/>
<dbReference type="eggNOG" id="arCOG01976">
    <property type="taxonomic scope" value="Archaea"/>
</dbReference>
<dbReference type="HOGENOM" id="CLU_1965426_0_0_2"/>
<dbReference type="Proteomes" id="UP000002199">
    <property type="component" value="Chromosome"/>
</dbReference>
<dbReference type="Gene3D" id="3.40.30.10">
    <property type="entry name" value="Glutaredoxin"/>
    <property type="match status" value="1"/>
</dbReference>
<dbReference type="InterPro" id="IPR036249">
    <property type="entry name" value="Thioredoxin-like_sf"/>
</dbReference>
<dbReference type="Pfam" id="PF13899">
    <property type="entry name" value="Thioredoxin_7"/>
    <property type="match status" value="1"/>
</dbReference>
<dbReference type="SUPFAM" id="SSF52833">
    <property type="entry name" value="Thioredoxin-like"/>
    <property type="match status" value="1"/>
</dbReference>
<organism>
    <name type="scientific">Archaeoglobus fulgidus (strain ATCC 49558 / DSM 4304 / JCM 9628 / NBRC 100126 / VC-16)</name>
    <dbReference type="NCBI Taxonomy" id="224325"/>
    <lineage>
        <taxon>Archaea</taxon>
        <taxon>Methanobacteriati</taxon>
        <taxon>Methanobacteriota</taxon>
        <taxon>Archaeoglobi</taxon>
        <taxon>Archaeoglobales</taxon>
        <taxon>Archaeoglobaceae</taxon>
        <taxon>Archaeoglobus</taxon>
    </lineage>
</organism>
<protein>
    <recommendedName>
        <fullName>Uncharacterized protein AF_1675</fullName>
    </recommendedName>
</protein>
<keyword id="KW-1185">Reference proteome</keyword>
<keyword id="KW-0732">Signal</keyword>
<sequence>MKAIYALLAVVALALVAVSLFSQSDSMEGWYSYQEGKKLSEEQKKEMFVFIGTSECGVCKRFKEFFRSNQSAMEFIRKNYIPVYVDAMREKTPVRVTFVPVFCTGFDGNLSCFSTAFPEELMMLLEK</sequence>
<reference key="1">
    <citation type="journal article" date="1997" name="Nature">
        <title>The complete genome sequence of the hyperthermophilic, sulphate-reducing archaeon Archaeoglobus fulgidus.</title>
        <authorList>
            <person name="Klenk H.-P."/>
            <person name="Clayton R.A."/>
            <person name="Tomb J.-F."/>
            <person name="White O."/>
            <person name="Nelson K.E."/>
            <person name="Ketchum K.A."/>
            <person name="Dodson R.J."/>
            <person name="Gwinn M.L."/>
            <person name="Hickey E.K."/>
            <person name="Peterson J.D."/>
            <person name="Richardson D.L."/>
            <person name="Kerlavage A.R."/>
            <person name="Graham D.E."/>
            <person name="Kyrpides N.C."/>
            <person name="Fleischmann R.D."/>
            <person name="Quackenbush J."/>
            <person name="Lee N.H."/>
            <person name="Sutton G.G."/>
            <person name="Gill S.R."/>
            <person name="Kirkness E.F."/>
            <person name="Dougherty B.A."/>
            <person name="McKenney K."/>
            <person name="Adams M.D."/>
            <person name="Loftus B.J."/>
            <person name="Peterson S.N."/>
            <person name="Reich C.I."/>
            <person name="McNeil L.K."/>
            <person name="Badger J.H."/>
            <person name="Glodek A."/>
            <person name="Zhou L."/>
            <person name="Overbeek R."/>
            <person name="Gocayne J.D."/>
            <person name="Weidman J.F."/>
            <person name="McDonald L.A."/>
            <person name="Utterback T.R."/>
            <person name="Cotton M.D."/>
            <person name="Spriggs T."/>
            <person name="Artiach P."/>
            <person name="Kaine B.P."/>
            <person name="Sykes S.M."/>
            <person name="Sadow P.W."/>
            <person name="D'Andrea K.P."/>
            <person name="Bowman C."/>
            <person name="Fujii C."/>
            <person name="Garland S.A."/>
            <person name="Mason T.M."/>
            <person name="Olsen G.J."/>
            <person name="Fraser C.M."/>
            <person name="Smith H.O."/>
            <person name="Woese C.R."/>
            <person name="Venter J.C."/>
        </authorList>
    </citation>
    <scope>NUCLEOTIDE SEQUENCE [LARGE SCALE GENOMIC DNA]</scope>
    <source>
        <strain>ATCC 49558 / DSM 4304 / JCM 9628 / NBRC 100126 / VC-16</strain>
    </source>
</reference>
<gene>
    <name type="ordered locus">AF_1675</name>
</gene>
<proteinExistence type="inferred from homology"/>
<name>Y1675_ARCFU</name>